<name>RNY_STRA3</name>
<proteinExistence type="inferred from homology"/>
<protein>
    <recommendedName>
        <fullName evidence="1">Ribonuclease Y</fullName>
        <shortName evidence="1">RNase Y</shortName>
        <ecNumber evidence="1">3.1.-.-</ecNumber>
    </recommendedName>
</protein>
<accession>P67280</accession>
<accession>Q8E1P7</accession>
<accession>Q8E762</accession>
<evidence type="ECO:0000255" key="1">
    <source>
        <dbReference type="HAMAP-Rule" id="MF_00335"/>
    </source>
</evidence>
<evidence type="ECO:0000255" key="2">
    <source>
        <dbReference type="PROSITE-ProRule" id="PRU01175"/>
    </source>
</evidence>
<evidence type="ECO:0000256" key="3">
    <source>
        <dbReference type="SAM" id="MobiDB-lite"/>
    </source>
</evidence>
<reference key="1">
    <citation type="journal article" date="2002" name="Mol. Microbiol.">
        <title>Genome sequence of Streptococcus agalactiae, a pathogen causing invasive neonatal disease.</title>
        <authorList>
            <person name="Glaser P."/>
            <person name="Rusniok C."/>
            <person name="Buchrieser C."/>
            <person name="Chevalier F."/>
            <person name="Frangeul L."/>
            <person name="Msadek T."/>
            <person name="Zouine M."/>
            <person name="Couve E."/>
            <person name="Lalioui L."/>
            <person name="Poyart C."/>
            <person name="Trieu-Cuot P."/>
            <person name="Kunst F."/>
        </authorList>
    </citation>
    <scope>NUCLEOTIDE SEQUENCE [LARGE SCALE GENOMIC DNA]</scope>
    <source>
        <strain>NEM316</strain>
    </source>
</reference>
<sequence>MFNIILAMVCALIGLIIGYVAISMKMKSSKEAAELTLLNAEQDAVDLRGKAEIEAEHIRKAAERESKAHQKELLLEAKEEARKYREEIEKEFKSDRQELKQMEARLTDRASSLDRKDENLSNKEKMLDSKEQSLTDKSRHINEREQEIATLETKKVEELSRIAELSQEEAKDIILADTEKDLAHDIATRIKEAEREVKDRSNKIAKDLLAQAMQRLAGEYVTEQTITTVHLPDDNMKGRIIGREGRNIRTLESLTGIDVIIDDTPEVVVLSGFDPIRREIARMTLESLIQDGRIHPARIEELVEKNRLEMDQRIREYGEAAAYEIGAPNLHPDLIKIMGRLQFRTSYGQNVLRHSVEVGKLAGILAGELGENVDLARRAGFLHDMGKAIDREVEGSHVEIGMEFARKYKEHPIVVNTIASHHGDVEPDSVIAVIVAAADALSSARPGARNESMENYIKRLRDLEEIANGFEGVQNAFALQAGREIRIMVQPGKVSDDQVVIMSHKVREKIEQNLDYPGNIKVTVIREMRAVDFAK</sequence>
<feature type="chain" id="PRO_0000163794" description="Ribonuclease Y">
    <location>
        <begin position="1"/>
        <end position="535"/>
    </location>
</feature>
<feature type="transmembrane region" description="Helical" evidence="1">
    <location>
        <begin position="4"/>
        <end position="24"/>
    </location>
</feature>
<feature type="domain" description="KH" evidence="1">
    <location>
        <begin position="225"/>
        <end position="285"/>
    </location>
</feature>
<feature type="domain" description="HD" evidence="2">
    <location>
        <begin position="351"/>
        <end position="444"/>
    </location>
</feature>
<feature type="region of interest" description="Disordered" evidence="3">
    <location>
        <begin position="107"/>
        <end position="145"/>
    </location>
</feature>
<comment type="function">
    <text evidence="1">Endoribonuclease that initiates mRNA decay.</text>
</comment>
<comment type="subcellular location">
    <subcellularLocation>
        <location evidence="1">Cell membrane</location>
        <topology evidence="1">Single-pass membrane protein</topology>
    </subcellularLocation>
</comment>
<comment type="similarity">
    <text evidence="1">Belongs to the RNase Y family.</text>
</comment>
<gene>
    <name evidence="1" type="primary">rny</name>
    <name type="ordered locus">gbs0295</name>
</gene>
<organism>
    <name type="scientific">Streptococcus agalactiae serotype III (strain NEM316)</name>
    <dbReference type="NCBI Taxonomy" id="211110"/>
    <lineage>
        <taxon>Bacteria</taxon>
        <taxon>Bacillati</taxon>
        <taxon>Bacillota</taxon>
        <taxon>Bacilli</taxon>
        <taxon>Lactobacillales</taxon>
        <taxon>Streptococcaceae</taxon>
        <taxon>Streptococcus</taxon>
    </lineage>
</organism>
<keyword id="KW-1003">Cell membrane</keyword>
<keyword id="KW-0255">Endonuclease</keyword>
<keyword id="KW-0378">Hydrolase</keyword>
<keyword id="KW-0472">Membrane</keyword>
<keyword id="KW-0540">Nuclease</keyword>
<keyword id="KW-0694">RNA-binding</keyword>
<keyword id="KW-0812">Transmembrane</keyword>
<keyword id="KW-1133">Transmembrane helix</keyword>
<dbReference type="EC" id="3.1.-.-" evidence="1"/>
<dbReference type="EMBL" id="AL766844">
    <property type="protein sequence ID" value="CAD45940.1"/>
    <property type="molecule type" value="Genomic_DNA"/>
</dbReference>
<dbReference type="RefSeq" id="WP_000481839.1">
    <property type="nucleotide sequence ID" value="NC_004368.1"/>
</dbReference>
<dbReference type="SMR" id="P67280"/>
<dbReference type="KEGG" id="san:gbs0295"/>
<dbReference type="eggNOG" id="COG1418">
    <property type="taxonomic scope" value="Bacteria"/>
</dbReference>
<dbReference type="eggNOG" id="COG4372">
    <property type="taxonomic scope" value="Bacteria"/>
</dbReference>
<dbReference type="HOGENOM" id="CLU_028328_1_0_9"/>
<dbReference type="Proteomes" id="UP000000823">
    <property type="component" value="Chromosome"/>
</dbReference>
<dbReference type="GO" id="GO:0005886">
    <property type="term" value="C:plasma membrane"/>
    <property type="evidence" value="ECO:0007669"/>
    <property type="project" value="UniProtKB-SubCell"/>
</dbReference>
<dbReference type="GO" id="GO:0003723">
    <property type="term" value="F:RNA binding"/>
    <property type="evidence" value="ECO:0007669"/>
    <property type="project" value="UniProtKB-UniRule"/>
</dbReference>
<dbReference type="GO" id="GO:0004521">
    <property type="term" value="F:RNA endonuclease activity"/>
    <property type="evidence" value="ECO:0007669"/>
    <property type="project" value="UniProtKB-UniRule"/>
</dbReference>
<dbReference type="GO" id="GO:0006402">
    <property type="term" value="P:mRNA catabolic process"/>
    <property type="evidence" value="ECO:0007669"/>
    <property type="project" value="UniProtKB-UniRule"/>
</dbReference>
<dbReference type="CDD" id="cd00077">
    <property type="entry name" value="HDc"/>
    <property type="match status" value="1"/>
</dbReference>
<dbReference type="CDD" id="cd22431">
    <property type="entry name" value="KH-I_RNaseY"/>
    <property type="match status" value="1"/>
</dbReference>
<dbReference type="FunFam" id="1.10.3210.10:FF:000003">
    <property type="entry name" value="Ribonuclease Y"/>
    <property type="match status" value="1"/>
</dbReference>
<dbReference type="Gene3D" id="1.10.3210.10">
    <property type="entry name" value="Hypothetical protein af1432"/>
    <property type="match status" value="1"/>
</dbReference>
<dbReference type="Gene3D" id="3.30.1370.10">
    <property type="entry name" value="K Homology domain, type 1"/>
    <property type="match status" value="1"/>
</dbReference>
<dbReference type="HAMAP" id="MF_00335">
    <property type="entry name" value="RNase_Y"/>
    <property type="match status" value="1"/>
</dbReference>
<dbReference type="InterPro" id="IPR003607">
    <property type="entry name" value="HD/PDEase_dom"/>
</dbReference>
<dbReference type="InterPro" id="IPR006674">
    <property type="entry name" value="HD_domain"/>
</dbReference>
<dbReference type="InterPro" id="IPR006675">
    <property type="entry name" value="HDIG_dom"/>
</dbReference>
<dbReference type="InterPro" id="IPR004087">
    <property type="entry name" value="KH_dom"/>
</dbReference>
<dbReference type="InterPro" id="IPR004088">
    <property type="entry name" value="KH_dom_type_1"/>
</dbReference>
<dbReference type="InterPro" id="IPR036612">
    <property type="entry name" value="KH_dom_type_1_sf"/>
</dbReference>
<dbReference type="InterPro" id="IPR017705">
    <property type="entry name" value="Ribonuclease_Y"/>
</dbReference>
<dbReference type="InterPro" id="IPR022711">
    <property type="entry name" value="RNase_Y_N"/>
</dbReference>
<dbReference type="NCBIfam" id="TIGR00277">
    <property type="entry name" value="HDIG"/>
    <property type="match status" value="1"/>
</dbReference>
<dbReference type="NCBIfam" id="NF000997">
    <property type="entry name" value="PRK00106.1"/>
    <property type="match status" value="1"/>
</dbReference>
<dbReference type="NCBIfam" id="TIGR03319">
    <property type="entry name" value="RNase_Y"/>
    <property type="match status" value="1"/>
</dbReference>
<dbReference type="PANTHER" id="PTHR12826">
    <property type="entry name" value="RIBONUCLEASE Y"/>
    <property type="match status" value="1"/>
</dbReference>
<dbReference type="PANTHER" id="PTHR12826:SF15">
    <property type="entry name" value="RIBONUCLEASE Y"/>
    <property type="match status" value="1"/>
</dbReference>
<dbReference type="Pfam" id="PF01966">
    <property type="entry name" value="HD"/>
    <property type="match status" value="1"/>
</dbReference>
<dbReference type="Pfam" id="PF00013">
    <property type="entry name" value="KH_1"/>
    <property type="match status" value="1"/>
</dbReference>
<dbReference type="Pfam" id="PF12072">
    <property type="entry name" value="RNase_Y_N"/>
    <property type="match status" value="1"/>
</dbReference>
<dbReference type="SMART" id="SM00471">
    <property type="entry name" value="HDc"/>
    <property type="match status" value="1"/>
</dbReference>
<dbReference type="SMART" id="SM00322">
    <property type="entry name" value="KH"/>
    <property type="match status" value="1"/>
</dbReference>
<dbReference type="SUPFAM" id="SSF54791">
    <property type="entry name" value="Eukaryotic type KH-domain (KH-domain type I)"/>
    <property type="match status" value="1"/>
</dbReference>
<dbReference type="SUPFAM" id="SSF109604">
    <property type="entry name" value="HD-domain/PDEase-like"/>
    <property type="match status" value="1"/>
</dbReference>
<dbReference type="PROSITE" id="PS51831">
    <property type="entry name" value="HD"/>
    <property type="match status" value="1"/>
</dbReference>
<dbReference type="PROSITE" id="PS50084">
    <property type="entry name" value="KH_TYPE_1"/>
    <property type="match status" value="1"/>
</dbReference>